<reference key="1">
    <citation type="journal article" date="1989" name="J. Gen. Microbiol.">
        <title>Nucleotide sequence of the Bacillus licheniformis homologue of the sporulation locus spoIIA of Bacillus subtilis.</title>
        <authorList>
            <person name="Yudkin M.D."/>
            <person name="Appleby L."/>
            <person name="Smith A.J."/>
        </authorList>
    </citation>
    <scope>NUCLEOTIDE SEQUENCE [GENOMIC DNA]</scope>
    <source>
        <strain>ATCC 9789 / DSM 8785 / NBRC 12195 / NCIMB 6346 / NCTC 6346 / IMET 11025 / NRS 243</strain>
    </source>
</reference>
<accession>P26778</accession>
<protein>
    <recommendedName>
        <fullName evidence="1">Anti-sigma F factor</fullName>
        <ecNumber evidence="1">2.7.11.1</ecNumber>
    </recommendedName>
    <alternativeName>
        <fullName evidence="1">Stage II sporulation protein AB</fullName>
    </alternativeName>
</protein>
<name>SP2AB_BACLI</name>
<keyword id="KW-0067">ATP-binding</keyword>
<keyword id="KW-0418">Kinase</keyword>
<keyword id="KW-0547">Nucleotide-binding</keyword>
<keyword id="KW-0723">Serine/threonine-protein kinase</keyword>
<keyword id="KW-0749">Sporulation</keyword>
<keyword id="KW-0808">Transferase</keyword>
<dbReference type="EC" id="2.7.11.1" evidence="1"/>
<dbReference type="EMBL" id="M25260">
    <property type="protein sequence ID" value="AAA22796.1"/>
    <property type="molecule type" value="Genomic_DNA"/>
</dbReference>
<dbReference type="PIR" id="B37165">
    <property type="entry name" value="B37165"/>
</dbReference>
<dbReference type="RefSeq" id="WP_003183165.1">
    <property type="nucleotide sequence ID" value="NZ_BOQU01000004.1"/>
</dbReference>
<dbReference type="SMR" id="P26778"/>
<dbReference type="PATRIC" id="fig|1402.63.peg.2097"/>
<dbReference type="GO" id="GO:0005524">
    <property type="term" value="F:ATP binding"/>
    <property type="evidence" value="ECO:0007669"/>
    <property type="project" value="UniProtKB-KW"/>
</dbReference>
<dbReference type="GO" id="GO:0106310">
    <property type="term" value="F:protein serine kinase activity"/>
    <property type="evidence" value="ECO:0007669"/>
    <property type="project" value="RHEA"/>
</dbReference>
<dbReference type="GO" id="GO:0004674">
    <property type="term" value="F:protein serine/threonine kinase activity"/>
    <property type="evidence" value="ECO:0007669"/>
    <property type="project" value="UniProtKB-KW"/>
</dbReference>
<dbReference type="GO" id="GO:0016989">
    <property type="term" value="F:sigma factor antagonist activity"/>
    <property type="evidence" value="ECO:0007669"/>
    <property type="project" value="InterPro"/>
</dbReference>
<dbReference type="GO" id="GO:0030436">
    <property type="term" value="P:asexual sporulation"/>
    <property type="evidence" value="ECO:0007669"/>
    <property type="project" value="UniProtKB-UniRule"/>
</dbReference>
<dbReference type="GO" id="GO:0042174">
    <property type="term" value="P:negative regulation of sporulation resulting in formation of a cellular spore"/>
    <property type="evidence" value="ECO:0007669"/>
    <property type="project" value="InterPro"/>
</dbReference>
<dbReference type="GO" id="GO:0030435">
    <property type="term" value="P:sporulation resulting in formation of a cellular spore"/>
    <property type="evidence" value="ECO:0007669"/>
    <property type="project" value="UniProtKB-KW"/>
</dbReference>
<dbReference type="Gene3D" id="3.30.565.10">
    <property type="entry name" value="Histidine kinase-like ATPase, C-terminal domain"/>
    <property type="match status" value="1"/>
</dbReference>
<dbReference type="HAMAP" id="MF_00637">
    <property type="entry name" value="Anti_sigma_F"/>
    <property type="match status" value="1"/>
</dbReference>
<dbReference type="InterPro" id="IPR050267">
    <property type="entry name" value="Anti-sigma-factor_SerPK"/>
</dbReference>
<dbReference type="InterPro" id="IPR010194">
    <property type="entry name" value="Anti-sigma_F"/>
</dbReference>
<dbReference type="InterPro" id="IPR036890">
    <property type="entry name" value="HATPase_C_sf"/>
</dbReference>
<dbReference type="NCBIfam" id="TIGR01925">
    <property type="entry name" value="spIIAB"/>
    <property type="match status" value="1"/>
</dbReference>
<dbReference type="PANTHER" id="PTHR35526:SF3">
    <property type="entry name" value="ANTI-SIGMA-F FACTOR RSBW"/>
    <property type="match status" value="1"/>
</dbReference>
<dbReference type="PANTHER" id="PTHR35526">
    <property type="entry name" value="ANTI-SIGMA-F FACTOR RSBW-RELATED"/>
    <property type="match status" value="1"/>
</dbReference>
<dbReference type="Pfam" id="PF13581">
    <property type="entry name" value="HATPase_c_2"/>
    <property type="match status" value="1"/>
</dbReference>
<dbReference type="SMART" id="SM00387">
    <property type="entry name" value="HATPase_c"/>
    <property type="match status" value="1"/>
</dbReference>
<dbReference type="SUPFAM" id="SSF55874">
    <property type="entry name" value="ATPase domain of HSP90 chaperone/DNA topoisomerase II/histidine kinase"/>
    <property type="match status" value="1"/>
</dbReference>
<gene>
    <name evidence="1" type="primary">spoIIAB</name>
</gene>
<sequence length="146" mass="16199">MKNEMNIQFTALSQNESFARVTVAAFIAQLDPTMDELTEIKTVVSEAVTNAIIHGYENSGQGNVYISVTLEDHIVYLTIRDEGVGIPDLEEARQPLFTTKPELERSGMGFTIMENFMDDISIDSSPEMGTTIHLTKHLSKSKALCN</sequence>
<proteinExistence type="inferred from homology"/>
<feature type="chain" id="PRO_0000203555" description="Anti-sigma F factor">
    <location>
        <begin position="1"/>
        <end position="146"/>
    </location>
</feature>
<comment type="function">
    <text evidence="1">Binds to sigma F and blocks its ability to form an RNA polymerase holoenzyme (E-sigma F). Phosphorylates SpoIIAA on a serine residue. This phosphorylation may enable SpoIIAA to act as an anti-anti-sigma factor that counteracts SpoIIAB and thus releases sigma F from inhibition.</text>
</comment>
<comment type="catalytic activity">
    <reaction evidence="1">
        <text>L-seryl-[protein] + ATP = O-phospho-L-seryl-[protein] + ADP + H(+)</text>
        <dbReference type="Rhea" id="RHEA:17989"/>
        <dbReference type="Rhea" id="RHEA-COMP:9863"/>
        <dbReference type="Rhea" id="RHEA-COMP:11604"/>
        <dbReference type="ChEBI" id="CHEBI:15378"/>
        <dbReference type="ChEBI" id="CHEBI:29999"/>
        <dbReference type="ChEBI" id="CHEBI:30616"/>
        <dbReference type="ChEBI" id="CHEBI:83421"/>
        <dbReference type="ChEBI" id="CHEBI:456216"/>
        <dbReference type="EC" id="2.7.11.1"/>
    </reaction>
</comment>
<comment type="catalytic activity">
    <reaction evidence="1">
        <text>L-threonyl-[protein] + ATP = O-phospho-L-threonyl-[protein] + ADP + H(+)</text>
        <dbReference type="Rhea" id="RHEA:46608"/>
        <dbReference type="Rhea" id="RHEA-COMP:11060"/>
        <dbReference type="Rhea" id="RHEA-COMP:11605"/>
        <dbReference type="ChEBI" id="CHEBI:15378"/>
        <dbReference type="ChEBI" id="CHEBI:30013"/>
        <dbReference type="ChEBI" id="CHEBI:30616"/>
        <dbReference type="ChEBI" id="CHEBI:61977"/>
        <dbReference type="ChEBI" id="CHEBI:456216"/>
        <dbReference type="EC" id="2.7.11.1"/>
    </reaction>
</comment>
<comment type="similarity">
    <text evidence="1">Belongs to the anti-sigma-factor family.</text>
</comment>
<evidence type="ECO:0000255" key="1">
    <source>
        <dbReference type="HAMAP-Rule" id="MF_00637"/>
    </source>
</evidence>
<organism>
    <name type="scientific">Bacillus licheniformis</name>
    <dbReference type="NCBI Taxonomy" id="1402"/>
    <lineage>
        <taxon>Bacteria</taxon>
        <taxon>Bacillati</taxon>
        <taxon>Bacillota</taxon>
        <taxon>Bacilli</taxon>
        <taxon>Bacillales</taxon>
        <taxon>Bacillaceae</taxon>
        <taxon>Bacillus</taxon>
    </lineage>
</organism>